<protein>
    <recommendedName>
        <fullName evidence="1">Ribosomal protein L11 methyltransferase</fullName>
        <shortName evidence="1">L11 Mtase</shortName>
        <ecNumber evidence="1">2.1.1.-</ecNumber>
    </recommendedName>
</protein>
<name>PRMA_BRUMB</name>
<reference key="1">
    <citation type="submission" date="2009-03" db="EMBL/GenBank/DDBJ databases">
        <title>Brucella melitensis ATCC 23457 whole genome shotgun sequencing project.</title>
        <authorList>
            <person name="Setubal J.C."/>
            <person name="Boyle S."/>
            <person name="Crasta O.R."/>
            <person name="Gillespie J.J."/>
            <person name="Kenyon R.W."/>
            <person name="Lu J."/>
            <person name="Mane S."/>
            <person name="Nagrani S."/>
            <person name="Shallom J.M."/>
            <person name="Shallom S."/>
            <person name="Shukla M."/>
            <person name="Snyder E.E."/>
            <person name="Sobral B.W."/>
            <person name="Wattam A.R."/>
            <person name="Will R."/>
            <person name="Williams K."/>
            <person name="Yoo H."/>
            <person name="Munk C."/>
            <person name="Tapia R."/>
            <person name="Han C."/>
            <person name="Detter J.C."/>
            <person name="Bruce D."/>
            <person name="Brettin T.S."/>
        </authorList>
    </citation>
    <scope>NUCLEOTIDE SEQUENCE [LARGE SCALE GENOMIC DNA]</scope>
    <source>
        <strain>ATCC 23457</strain>
    </source>
</reference>
<evidence type="ECO:0000255" key="1">
    <source>
        <dbReference type="HAMAP-Rule" id="MF_00735"/>
    </source>
</evidence>
<feature type="chain" id="PRO_1000192588" description="Ribosomal protein L11 methyltransferase">
    <location>
        <begin position="1"/>
        <end position="285"/>
    </location>
</feature>
<feature type="binding site" evidence="1">
    <location>
        <position position="131"/>
    </location>
    <ligand>
        <name>S-adenosyl-L-methionine</name>
        <dbReference type="ChEBI" id="CHEBI:59789"/>
    </ligand>
</feature>
<feature type="binding site" evidence="1">
    <location>
        <position position="154"/>
    </location>
    <ligand>
        <name>S-adenosyl-L-methionine</name>
        <dbReference type="ChEBI" id="CHEBI:59789"/>
    </ligand>
</feature>
<feature type="binding site" evidence="1">
    <location>
        <position position="176"/>
    </location>
    <ligand>
        <name>S-adenosyl-L-methionine</name>
        <dbReference type="ChEBI" id="CHEBI:59789"/>
    </ligand>
</feature>
<feature type="binding site" evidence="1">
    <location>
        <position position="223"/>
    </location>
    <ligand>
        <name>S-adenosyl-L-methionine</name>
        <dbReference type="ChEBI" id="CHEBI:59789"/>
    </ligand>
</feature>
<organism>
    <name type="scientific">Brucella melitensis biotype 2 (strain ATCC 23457)</name>
    <dbReference type="NCBI Taxonomy" id="546272"/>
    <lineage>
        <taxon>Bacteria</taxon>
        <taxon>Pseudomonadati</taxon>
        <taxon>Pseudomonadota</taxon>
        <taxon>Alphaproteobacteria</taxon>
        <taxon>Hyphomicrobiales</taxon>
        <taxon>Brucellaceae</taxon>
        <taxon>Brucella/Ochrobactrum group</taxon>
        <taxon>Brucella</taxon>
    </lineage>
</organism>
<accession>C0RE56</accession>
<keyword id="KW-0963">Cytoplasm</keyword>
<keyword id="KW-0489">Methyltransferase</keyword>
<keyword id="KW-0949">S-adenosyl-L-methionine</keyword>
<keyword id="KW-0808">Transferase</keyword>
<dbReference type="EC" id="2.1.1.-" evidence="1"/>
<dbReference type="EMBL" id="CP001488">
    <property type="protein sequence ID" value="ACO01178.1"/>
    <property type="molecule type" value="Genomic_DNA"/>
</dbReference>
<dbReference type="RefSeq" id="WP_002964525.1">
    <property type="nucleotide sequence ID" value="NC_012441.1"/>
</dbReference>
<dbReference type="SMR" id="C0RE56"/>
<dbReference type="KEGG" id="bmi:BMEA_A1465"/>
<dbReference type="HOGENOM" id="CLU_049382_3_0_5"/>
<dbReference type="Proteomes" id="UP000001748">
    <property type="component" value="Chromosome I"/>
</dbReference>
<dbReference type="GO" id="GO:0005737">
    <property type="term" value="C:cytoplasm"/>
    <property type="evidence" value="ECO:0007669"/>
    <property type="project" value="UniProtKB-SubCell"/>
</dbReference>
<dbReference type="GO" id="GO:0016279">
    <property type="term" value="F:protein-lysine N-methyltransferase activity"/>
    <property type="evidence" value="ECO:0007669"/>
    <property type="project" value="RHEA"/>
</dbReference>
<dbReference type="GO" id="GO:0032259">
    <property type="term" value="P:methylation"/>
    <property type="evidence" value="ECO:0007669"/>
    <property type="project" value="UniProtKB-KW"/>
</dbReference>
<dbReference type="CDD" id="cd02440">
    <property type="entry name" value="AdoMet_MTases"/>
    <property type="match status" value="1"/>
</dbReference>
<dbReference type="Gene3D" id="3.40.50.150">
    <property type="entry name" value="Vaccinia Virus protein VP39"/>
    <property type="match status" value="1"/>
</dbReference>
<dbReference type="HAMAP" id="MF_00735">
    <property type="entry name" value="Methyltr_PrmA"/>
    <property type="match status" value="1"/>
</dbReference>
<dbReference type="InterPro" id="IPR050078">
    <property type="entry name" value="Ribosomal_L11_MeTrfase_PrmA"/>
</dbReference>
<dbReference type="InterPro" id="IPR004498">
    <property type="entry name" value="Ribosomal_PrmA_MeTrfase"/>
</dbReference>
<dbReference type="InterPro" id="IPR029063">
    <property type="entry name" value="SAM-dependent_MTases_sf"/>
</dbReference>
<dbReference type="NCBIfam" id="NF001784">
    <property type="entry name" value="PRK00517.2-1"/>
    <property type="match status" value="1"/>
</dbReference>
<dbReference type="PANTHER" id="PTHR43648">
    <property type="entry name" value="ELECTRON TRANSFER FLAVOPROTEIN BETA SUBUNIT LYSINE METHYLTRANSFERASE"/>
    <property type="match status" value="1"/>
</dbReference>
<dbReference type="PANTHER" id="PTHR43648:SF1">
    <property type="entry name" value="ELECTRON TRANSFER FLAVOPROTEIN BETA SUBUNIT LYSINE METHYLTRANSFERASE"/>
    <property type="match status" value="1"/>
</dbReference>
<dbReference type="Pfam" id="PF06325">
    <property type="entry name" value="PrmA"/>
    <property type="match status" value="1"/>
</dbReference>
<dbReference type="PIRSF" id="PIRSF000401">
    <property type="entry name" value="RPL11_MTase"/>
    <property type="match status" value="1"/>
</dbReference>
<dbReference type="SUPFAM" id="SSF53335">
    <property type="entry name" value="S-adenosyl-L-methionine-dependent methyltransferases"/>
    <property type="match status" value="1"/>
</dbReference>
<proteinExistence type="inferred from homology"/>
<gene>
    <name evidence="1" type="primary">prmA</name>
    <name type="ordered locus">BMEA_A1465</name>
</gene>
<sequence length="285" mass="30584">MAQSRLFFSADKAEAERTYNILEQAFEDDGFPIAITEIDEDRQIFEVSVYVEDDAEEVAARVDALVGPGLFDTEELPDIDWVTHSLEGLKPVRAGHFFVHGSHDRDKIEPGDIAIEIDAGLAFGTGHHGTTAGCLELIEETVETEHPTNALDLGTGSAVLAIAIARLAPIPILATDIDPIAVTVAAENAAKNGVAEHIVTATAEGFGHPIFRSYSPFDLIVANILANPLIELAPSIKEHLAPGGSIILSGILDSQHDAVLAAYQTQGLTHQKTLHREGWVAIHLK</sequence>
<comment type="function">
    <text evidence="1">Methylates ribosomal protein L11.</text>
</comment>
<comment type="catalytic activity">
    <reaction evidence="1">
        <text>L-lysyl-[protein] + 3 S-adenosyl-L-methionine = N(6),N(6),N(6)-trimethyl-L-lysyl-[protein] + 3 S-adenosyl-L-homocysteine + 3 H(+)</text>
        <dbReference type="Rhea" id="RHEA:54192"/>
        <dbReference type="Rhea" id="RHEA-COMP:9752"/>
        <dbReference type="Rhea" id="RHEA-COMP:13826"/>
        <dbReference type="ChEBI" id="CHEBI:15378"/>
        <dbReference type="ChEBI" id="CHEBI:29969"/>
        <dbReference type="ChEBI" id="CHEBI:57856"/>
        <dbReference type="ChEBI" id="CHEBI:59789"/>
        <dbReference type="ChEBI" id="CHEBI:61961"/>
    </reaction>
</comment>
<comment type="subcellular location">
    <subcellularLocation>
        <location evidence="1">Cytoplasm</location>
    </subcellularLocation>
</comment>
<comment type="similarity">
    <text evidence="1">Belongs to the methyltransferase superfamily. PrmA family.</text>
</comment>